<proteinExistence type="evidence at protein level"/>
<protein>
    <recommendedName>
        <fullName evidence="6">Mitochondrial cox1 translation regulator ppr4</fullName>
    </recommendedName>
</protein>
<gene>
    <name evidence="6" type="primary">ppr4</name>
    <name type="ORF">SPAC8C9.06c</name>
</gene>
<accession>O14275</accession>
<evidence type="ECO:0000255" key="1"/>
<evidence type="ECO:0000269" key="2">
    <source>
    </source>
</evidence>
<evidence type="ECO:0000269" key="3">
    <source>
    </source>
</evidence>
<evidence type="ECO:0000269" key="4">
    <source>
    </source>
</evidence>
<evidence type="ECO:0000269" key="5">
    <source>
    </source>
</evidence>
<evidence type="ECO:0000312" key="6">
    <source>
        <dbReference type="PomBase" id="SPAC8C9.06c"/>
    </source>
</evidence>
<dbReference type="EMBL" id="CU329670">
    <property type="protein sequence ID" value="CAB16294.1"/>
    <property type="molecule type" value="Genomic_DNA"/>
</dbReference>
<dbReference type="PIR" id="T39143">
    <property type="entry name" value="T39143"/>
</dbReference>
<dbReference type="RefSeq" id="NP_594277.1">
    <property type="nucleotide sequence ID" value="NM_001019700.2"/>
</dbReference>
<dbReference type="BioGRID" id="279736">
    <property type="interactions" value="1"/>
</dbReference>
<dbReference type="ComplexPortal" id="CPX-25771">
    <property type="entry name" value="MRH5C complex"/>
</dbReference>
<dbReference type="FunCoup" id="O14275">
    <property type="interactions" value="195"/>
</dbReference>
<dbReference type="STRING" id="284812.O14275"/>
<dbReference type="PaxDb" id="4896-SPAC8C9.06c.1"/>
<dbReference type="EnsemblFungi" id="SPAC8C9.06c.1">
    <property type="protein sequence ID" value="SPAC8C9.06c.1:pep"/>
    <property type="gene ID" value="SPAC8C9.06c"/>
</dbReference>
<dbReference type="GeneID" id="2543312"/>
<dbReference type="KEGG" id="spo:2543312"/>
<dbReference type="PomBase" id="SPAC8C9.06c">
    <property type="gene designation" value="ppr4"/>
</dbReference>
<dbReference type="VEuPathDB" id="FungiDB:SPAC8C9.06c"/>
<dbReference type="eggNOG" id="KOG4197">
    <property type="taxonomic scope" value="Eukaryota"/>
</dbReference>
<dbReference type="HOGENOM" id="CLU_315967_0_0_1"/>
<dbReference type="InParanoid" id="O14275"/>
<dbReference type="OMA" id="PELAWEC"/>
<dbReference type="PRO" id="PR:O14275"/>
<dbReference type="Proteomes" id="UP000002485">
    <property type="component" value="Chromosome I"/>
</dbReference>
<dbReference type="GO" id="GO:0005737">
    <property type="term" value="C:cytoplasm"/>
    <property type="evidence" value="ECO:0007005"/>
    <property type="project" value="PomBase"/>
</dbReference>
<dbReference type="GO" id="GO:0099616">
    <property type="term" value="C:extrinsic component of matrix side of mitochondrial inner membrane"/>
    <property type="evidence" value="ECO:0000266"/>
    <property type="project" value="PomBase"/>
</dbReference>
<dbReference type="GO" id="GO:0005739">
    <property type="term" value="C:mitochondrion"/>
    <property type="evidence" value="ECO:0000314"/>
    <property type="project" value="PomBase"/>
</dbReference>
<dbReference type="GO" id="GO:0048027">
    <property type="term" value="F:mRNA 5'-UTR binding"/>
    <property type="evidence" value="ECO:0000304"/>
    <property type="project" value="PomBase"/>
</dbReference>
<dbReference type="GO" id="GO:0003729">
    <property type="term" value="F:mRNA binding"/>
    <property type="evidence" value="ECO:0000318"/>
    <property type="project" value="GO_Central"/>
</dbReference>
<dbReference type="GO" id="GO:0008494">
    <property type="term" value="F:translation activator activity"/>
    <property type="evidence" value="ECO:0000266"/>
    <property type="project" value="PomBase"/>
</dbReference>
<dbReference type="GO" id="GO:0045182">
    <property type="term" value="F:translation regulator activity"/>
    <property type="evidence" value="ECO:0000315"/>
    <property type="project" value="UniProtKB"/>
</dbReference>
<dbReference type="GO" id="GO:0140053">
    <property type="term" value="P:mitochondrial gene expression"/>
    <property type="evidence" value="ECO:0000315"/>
    <property type="project" value="PomBase"/>
</dbReference>
<dbReference type="GO" id="GO:0032543">
    <property type="term" value="P:mitochondrial translation"/>
    <property type="evidence" value="ECO:0000269"/>
    <property type="project" value="PomBase"/>
</dbReference>
<dbReference type="GO" id="GO:0070124">
    <property type="term" value="P:mitochondrial translational initiation"/>
    <property type="evidence" value="ECO:0000315"/>
    <property type="project" value="UniProtKB"/>
</dbReference>
<dbReference type="GO" id="GO:0070134">
    <property type="term" value="P:positive regulation of mitochondrial translational initiation"/>
    <property type="evidence" value="ECO:0000266"/>
    <property type="project" value="PomBase"/>
</dbReference>
<dbReference type="Gene3D" id="1.25.40.10">
    <property type="entry name" value="Tetratricopeptide repeat domain"/>
    <property type="match status" value="3"/>
</dbReference>
<dbReference type="InterPro" id="IPR002885">
    <property type="entry name" value="Pentatricopeptide_rpt"/>
</dbReference>
<dbReference type="InterPro" id="IPR011990">
    <property type="entry name" value="TPR-like_helical_dom_sf"/>
</dbReference>
<dbReference type="PANTHER" id="PTHR47938:SF35">
    <property type="entry name" value="PENTATRICOPEPTIDE REPEAT-CONTAINING PROTEIN 4, MITOCHONDRIAL-RELATED"/>
    <property type="match status" value="1"/>
</dbReference>
<dbReference type="PANTHER" id="PTHR47938">
    <property type="entry name" value="RESPIRATORY COMPLEX I CHAPERONE (CIA84), PUTATIVE (AFU_ORTHOLOGUE AFUA_2G06020)-RELATED"/>
    <property type="match status" value="1"/>
</dbReference>
<dbReference type="Pfam" id="PF01535">
    <property type="entry name" value="PPR"/>
    <property type="match status" value="1"/>
</dbReference>
<reference key="1">
    <citation type="journal article" date="2002" name="Nature">
        <title>The genome sequence of Schizosaccharomyces pombe.</title>
        <authorList>
            <person name="Wood V."/>
            <person name="Gwilliam R."/>
            <person name="Rajandream M.A."/>
            <person name="Lyne M.H."/>
            <person name="Lyne R."/>
            <person name="Stewart A."/>
            <person name="Sgouros J.G."/>
            <person name="Peat N."/>
            <person name="Hayles J."/>
            <person name="Baker S.G."/>
            <person name="Basham D."/>
            <person name="Bowman S."/>
            <person name="Brooks K."/>
            <person name="Brown D."/>
            <person name="Brown S."/>
            <person name="Chillingworth T."/>
            <person name="Churcher C.M."/>
            <person name="Collins M."/>
            <person name="Connor R."/>
            <person name="Cronin A."/>
            <person name="Davis P."/>
            <person name="Feltwell T."/>
            <person name="Fraser A."/>
            <person name="Gentles S."/>
            <person name="Goble A."/>
            <person name="Hamlin N."/>
            <person name="Harris D.E."/>
            <person name="Hidalgo J."/>
            <person name="Hodgson G."/>
            <person name="Holroyd S."/>
            <person name="Hornsby T."/>
            <person name="Howarth S."/>
            <person name="Huckle E.J."/>
            <person name="Hunt S."/>
            <person name="Jagels K."/>
            <person name="James K.D."/>
            <person name="Jones L."/>
            <person name="Jones M."/>
            <person name="Leather S."/>
            <person name="McDonald S."/>
            <person name="McLean J."/>
            <person name="Mooney P."/>
            <person name="Moule S."/>
            <person name="Mungall K.L."/>
            <person name="Murphy L.D."/>
            <person name="Niblett D."/>
            <person name="Odell C."/>
            <person name="Oliver K."/>
            <person name="O'Neil S."/>
            <person name="Pearson D."/>
            <person name="Quail M.A."/>
            <person name="Rabbinowitsch E."/>
            <person name="Rutherford K.M."/>
            <person name="Rutter S."/>
            <person name="Saunders D."/>
            <person name="Seeger K."/>
            <person name="Sharp S."/>
            <person name="Skelton J."/>
            <person name="Simmonds M.N."/>
            <person name="Squares R."/>
            <person name="Squares S."/>
            <person name="Stevens K."/>
            <person name="Taylor K."/>
            <person name="Taylor R.G."/>
            <person name="Tivey A."/>
            <person name="Walsh S.V."/>
            <person name="Warren T."/>
            <person name="Whitehead S."/>
            <person name="Woodward J.R."/>
            <person name="Volckaert G."/>
            <person name="Aert R."/>
            <person name="Robben J."/>
            <person name="Grymonprez B."/>
            <person name="Weltjens I."/>
            <person name="Vanstreels E."/>
            <person name="Rieger M."/>
            <person name="Schaefer M."/>
            <person name="Mueller-Auer S."/>
            <person name="Gabel C."/>
            <person name="Fuchs M."/>
            <person name="Duesterhoeft A."/>
            <person name="Fritzc C."/>
            <person name="Holzer E."/>
            <person name="Moestl D."/>
            <person name="Hilbert H."/>
            <person name="Borzym K."/>
            <person name="Langer I."/>
            <person name="Beck A."/>
            <person name="Lehrach H."/>
            <person name="Reinhardt R."/>
            <person name="Pohl T.M."/>
            <person name="Eger P."/>
            <person name="Zimmermann W."/>
            <person name="Wedler H."/>
            <person name="Wambutt R."/>
            <person name="Purnelle B."/>
            <person name="Goffeau A."/>
            <person name="Cadieu E."/>
            <person name="Dreano S."/>
            <person name="Gloux S."/>
            <person name="Lelaure V."/>
            <person name="Mottier S."/>
            <person name="Galibert F."/>
            <person name="Aves S.J."/>
            <person name="Xiang Z."/>
            <person name="Hunt C."/>
            <person name="Moore K."/>
            <person name="Hurst S.M."/>
            <person name="Lucas M."/>
            <person name="Rochet M."/>
            <person name="Gaillardin C."/>
            <person name="Tallada V.A."/>
            <person name="Garzon A."/>
            <person name="Thode G."/>
            <person name="Daga R.R."/>
            <person name="Cruzado L."/>
            <person name="Jimenez J."/>
            <person name="Sanchez M."/>
            <person name="del Rey F."/>
            <person name="Benito J."/>
            <person name="Dominguez A."/>
            <person name="Revuelta J.L."/>
            <person name="Moreno S."/>
            <person name="Armstrong J."/>
            <person name="Forsburg S.L."/>
            <person name="Cerutti L."/>
            <person name="Lowe T."/>
            <person name="McCombie W.R."/>
            <person name="Paulsen I."/>
            <person name="Potashkin J."/>
            <person name="Shpakovski G.V."/>
            <person name="Ussery D."/>
            <person name="Barrell B.G."/>
            <person name="Nurse P."/>
        </authorList>
    </citation>
    <scope>NUCLEOTIDE SEQUENCE [LARGE SCALE GENOMIC DNA]</scope>
    <source>
        <strain>972 / ATCC 24843</strain>
    </source>
</reference>
<reference key="2">
    <citation type="journal article" date="2006" name="Nat. Biotechnol.">
        <title>ORFeome cloning and global analysis of protein localization in the fission yeast Schizosaccharomyces pombe.</title>
        <authorList>
            <person name="Matsuyama A."/>
            <person name="Arai R."/>
            <person name="Yashiroda Y."/>
            <person name="Shirai A."/>
            <person name="Kamata A."/>
            <person name="Sekido S."/>
            <person name="Kobayashi Y."/>
            <person name="Hashimoto A."/>
            <person name="Hamamoto M."/>
            <person name="Hiraoka Y."/>
            <person name="Horinouchi S."/>
            <person name="Yoshida M."/>
        </authorList>
    </citation>
    <scope>SUBCELLULAR LOCATION [LARGE SCALE ANALYSIS]</scope>
</reference>
<reference key="3">
    <citation type="journal article" date="2011" name="Nucleic Acids Res.">
        <title>A genome wide study in fission yeast reveals nine PPR proteins that regulate mitochondrial gene expression.</title>
        <authorList>
            <person name="Kuhl I."/>
            <person name="Dujeancourt L."/>
            <person name="Gaisne M."/>
            <person name="Herbert C.J."/>
            <person name="Bonnefoy N."/>
        </authorList>
    </citation>
    <scope>DOMAIN</scope>
    <scope>SUBCELLULAR LOCATION</scope>
    <scope>DISRUPTION PHENOTYPE</scope>
    <scope>FUNCTION</scope>
</reference>
<reference key="4">
    <citation type="journal article" date="2021" name="Nucleic Acids Res.">
        <title>Translational activators and mitoribosomal isoforms cooperate to mediate mRNA-specific translation in Schizosaccharomyces pombe mitochondria.</title>
        <authorList>
            <person name="Herbert C.J."/>
            <person name="Labarre-Mariotte S."/>
            <person name="Cornu D."/>
            <person name="Sophie C."/>
            <person name="Panozzo C."/>
            <person name="Michel T."/>
            <person name="Dujardin G."/>
            <person name="Bonnefoy N."/>
        </authorList>
    </citation>
    <scope>IDENTIFICATION IN THE MRH5C COMPLEX</scope>
</reference>
<reference key="5">
    <citation type="journal article" date="2024" name="J. Biol. Chem.">
        <title>Sls1 and Mtf2 mediate the assembly of the Mrh5C complex required for activation of cox1 mRNA translation.</title>
        <authorList>
            <person name="Wang Y."/>
            <person name="Jin T."/>
            <person name="Huang Y."/>
        </authorList>
    </citation>
    <scope>FUNCTION</scope>
    <scope>IDENTIFICATION IN THE MRH5C COMPLEX</scope>
    <scope>SUBUNIT</scope>
</reference>
<keyword id="KW-0010">Activator</keyword>
<keyword id="KW-0496">Mitochondrion</keyword>
<keyword id="KW-0648">Protein biosynthesis</keyword>
<keyword id="KW-1185">Reference proteome</keyword>
<keyword id="KW-0677">Repeat</keyword>
<keyword id="KW-0694">RNA-binding</keyword>
<keyword id="KW-0809">Transit peptide</keyword>
<keyword id="KW-0810">Translation regulation</keyword>
<feature type="transit peptide" description="Mitochondrion" evidence="1">
    <location>
        <begin position="1"/>
        <end position="16"/>
    </location>
</feature>
<feature type="chain" id="PRO_0000317702" description="Mitochondrial cox1 translation regulator ppr4">
    <location>
        <begin position="17"/>
        <end position="931"/>
    </location>
</feature>
<feature type="repeat" description="PPR 1">
    <location>
        <begin position="247"/>
        <end position="277"/>
    </location>
</feature>
<feature type="repeat" description="PPR 2">
    <location>
        <begin position="282"/>
        <end position="316"/>
    </location>
</feature>
<feature type="repeat" description="PPR 3">
    <location>
        <begin position="429"/>
        <end position="461"/>
    </location>
</feature>
<feature type="repeat" description="PPR 4">
    <location>
        <begin position="462"/>
        <end position="496"/>
    </location>
</feature>
<feature type="repeat" description="PPR 5">
    <location>
        <begin position="497"/>
        <end position="531"/>
    </location>
</feature>
<feature type="repeat" description="PPR 6">
    <location>
        <begin position="598"/>
        <end position="632"/>
    </location>
</feature>
<feature type="repeat" description="PPR 7">
    <location>
        <begin position="683"/>
        <end position="713"/>
    </location>
</feature>
<comment type="function">
    <text evidence="3 5">RNA-binding translation activation factor that as part of the MRH5C complex specifically recruits cox1 mRNA to the mitochondrial ribosome for translation initiation.</text>
</comment>
<comment type="subunit">
    <text evidence="4 5">Component of the MRH5C complex, composed of mrh5, ppr4, mtf2, and sls1 (PubMed:34634819, PubMed:38499152). Proteins mtf2 and sls1 form a subcomplex that serves as a scaffold to bring mrh5 and ppr4 together (PubMed:38499152). The MRH5C complex associates with the small subunit of the mitochondrial ribosome (PubMed:38499152).</text>
</comment>
<comment type="subcellular location">
    <subcellularLocation>
        <location evidence="2 3">Mitochondrion</location>
    </subcellularLocation>
</comment>
<comment type="disruption phenotype">
    <text evidence="3 5">Impairs growth on galactose (PubMed:21727087). Decreases the association of cox1, but not cob1, mRNA with the mitochondrial small ribosomal subunit (PubMed:38499152).</text>
</comment>
<organism>
    <name type="scientific">Schizosaccharomyces pombe (strain 972 / ATCC 24843)</name>
    <name type="common">Fission yeast</name>
    <dbReference type="NCBI Taxonomy" id="284812"/>
    <lineage>
        <taxon>Eukaryota</taxon>
        <taxon>Fungi</taxon>
        <taxon>Dikarya</taxon>
        <taxon>Ascomycota</taxon>
        <taxon>Taphrinomycotina</taxon>
        <taxon>Schizosaccharomycetes</taxon>
        <taxon>Schizosaccharomycetales</taxon>
        <taxon>Schizosaccharomycetaceae</taxon>
        <taxon>Schizosaccharomyces</taxon>
    </lineage>
</organism>
<sequence>MSKSFAYRHIWCFWRFNTPLLWFPQPLKYWPAFQQSHTFNSMSVFKNDNAIANQTTVNESDVKRNVEKINDIYECSNNTKSPCFPNSDSRIPLVNWKTSTNPTLQVRAYMLDLLLPFFTLDLLPFLNKVCECCNHMLLDNPKIKQDLPFAFCYLFSSYFSYKSSRQYTCSSEEISKVFRHLNRLGGSEYVLHLFAQIPKALCKELTDVRTLNHPLRSIFTFCFKNISNPPNLLKLLTKLYPRSDRANEVLYTQYLGFLTKRGDYQIAIYMFDEMYRTHHWSSFTACRLMIESLVRQNKFEEAISLYKKIIAKRPKIARDKKILNLLLYISTVSNRSPDAFKLALQSISNANQIPSFDVFSRLMSALVKYNMTEMILPLVKQYDHKFRNLYSPNIFLSIVQALVFCGDMVNIQRWYNMSRVNSELSRIKHLLNCFLNSSTVSLDVSMVLELLRDLKKKKIKVDERTLVICITIFSRRKDLFAMEKIHQYFSDQGIKTSNQAYAALLDAYIEAEDTEKIELYLGKIRRLGITEDVSINRMLMRLALDRLDWDLLEQCTKVAERKDPEGQDYLSTITMLYHVRQHELNLALRIFSGIQKPNVVHYSIAATVLGNLNQLDQLLLLEKRMESEGKAPTALSLVAFVSSYCKQGAEGLDEAKRYMSKNFQPDKRALLFNPRTANDMTYPPSLFSSLIKEYTSLGDIKEAKQVLSTYLEYFSKNITSKPDIPFAIASMRLYCSLHDTVLSRQFWDLILQVAQQNFITTDIAAVVDDKNIPSPSGVIPAYKSALNVAAETYFSFLASVNSFQELDQEWSRLEKLGFEYDDSLQNKRIIWLLYDDRLDAAIKRVYNIFLSSKRIEELIPDASSQNSIISFFLSPDSPLYFSTLKALRDKLDMAVEDDFVRISQGILVPTVKYLQTIRRDNEILFNLLAKV</sequence>
<name>PT309_SCHPO</name>